<evidence type="ECO:0000250" key="1"/>
<evidence type="ECO:0000305" key="2"/>
<dbReference type="EC" id="2.3.1.47"/>
<dbReference type="EMBL" id="AE004439">
    <property type="protein sequence ID" value="AAK03985.1"/>
    <property type="molecule type" value="Genomic_DNA"/>
</dbReference>
<dbReference type="RefSeq" id="WP_005724990.1">
    <property type="nucleotide sequence ID" value="NC_002663.1"/>
</dbReference>
<dbReference type="SMR" id="Q9CJU0"/>
<dbReference type="STRING" id="272843.PM1901"/>
<dbReference type="EnsemblBacteria" id="AAK03985">
    <property type="protein sequence ID" value="AAK03985"/>
    <property type="gene ID" value="PM1901"/>
</dbReference>
<dbReference type="KEGG" id="pmu:PM1901"/>
<dbReference type="PATRIC" id="fig|272843.6.peg.1923"/>
<dbReference type="HOGENOM" id="CLU_015846_11_2_6"/>
<dbReference type="OrthoDB" id="9807157at2"/>
<dbReference type="UniPathway" id="UPA00078"/>
<dbReference type="Proteomes" id="UP000000809">
    <property type="component" value="Chromosome"/>
</dbReference>
<dbReference type="GO" id="GO:0008710">
    <property type="term" value="F:8-amino-7-oxononanoate synthase activity"/>
    <property type="evidence" value="ECO:0007669"/>
    <property type="project" value="UniProtKB-EC"/>
</dbReference>
<dbReference type="GO" id="GO:0030170">
    <property type="term" value="F:pyridoxal phosphate binding"/>
    <property type="evidence" value="ECO:0007669"/>
    <property type="project" value="InterPro"/>
</dbReference>
<dbReference type="GO" id="GO:0009102">
    <property type="term" value="P:biotin biosynthetic process"/>
    <property type="evidence" value="ECO:0007669"/>
    <property type="project" value="UniProtKB-UniPathway"/>
</dbReference>
<dbReference type="CDD" id="cd06454">
    <property type="entry name" value="KBL_like"/>
    <property type="match status" value="1"/>
</dbReference>
<dbReference type="Gene3D" id="3.90.1150.10">
    <property type="entry name" value="Aspartate Aminotransferase, domain 1"/>
    <property type="match status" value="1"/>
</dbReference>
<dbReference type="Gene3D" id="3.40.640.10">
    <property type="entry name" value="Type I PLP-dependent aspartate aminotransferase-like (Major domain)"/>
    <property type="match status" value="1"/>
</dbReference>
<dbReference type="InterPro" id="IPR001917">
    <property type="entry name" value="Aminotrans_II_pyridoxalP_BS"/>
</dbReference>
<dbReference type="InterPro" id="IPR004839">
    <property type="entry name" value="Aminotransferase_I/II_large"/>
</dbReference>
<dbReference type="InterPro" id="IPR050087">
    <property type="entry name" value="AON_synthase_class-II"/>
</dbReference>
<dbReference type="InterPro" id="IPR004723">
    <property type="entry name" value="AONS_Archaea/Proteobacteria"/>
</dbReference>
<dbReference type="InterPro" id="IPR015424">
    <property type="entry name" value="PyrdxlP-dep_Trfase"/>
</dbReference>
<dbReference type="InterPro" id="IPR015421">
    <property type="entry name" value="PyrdxlP-dep_Trfase_major"/>
</dbReference>
<dbReference type="InterPro" id="IPR015422">
    <property type="entry name" value="PyrdxlP-dep_Trfase_small"/>
</dbReference>
<dbReference type="NCBIfam" id="TIGR00858">
    <property type="entry name" value="bioF"/>
    <property type="match status" value="1"/>
</dbReference>
<dbReference type="PANTHER" id="PTHR13693:SF100">
    <property type="entry name" value="8-AMINO-7-OXONONANOATE SYNTHASE"/>
    <property type="match status" value="1"/>
</dbReference>
<dbReference type="PANTHER" id="PTHR13693">
    <property type="entry name" value="CLASS II AMINOTRANSFERASE/8-AMINO-7-OXONONANOATE SYNTHASE"/>
    <property type="match status" value="1"/>
</dbReference>
<dbReference type="Pfam" id="PF00155">
    <property type="entry name" value="Aminotran_1_2"/>
    <property type="match status" value="1"/>
</dbReference>
<dbReference type="SUPFAM" id="SSF53383">
    <property type="entry name" value="PLP-dependent transferases"/>
    <property type="match status" value="1"/>
</dbReference>
<dbReference type="PROSITE" id="PS00599">
    <property type="entry name" value="AA_TRANSFER_CLASS_2"/>
    <property type="match status" value="1"/>
</dbReference>
<gene>
    <name type="primary">bioF</name>
    <name type="ordered locus">PM1901</name>
</gene>
<comment type="function">
    <text evidence="1">Catalyzes the decarboxylative condensation of pimeloyl-[acyl-carrier protein] and L-alanine to produce 8-amino-7-oxononanoate (AON), [acyl-carrier protein], and carbon dioxide.</text>
</comment>
<comment type="catalytic activity">
    <reaction>
        <text>6-carboxyhexanoyl-[ACP] + L-alanine + H(+) = (8S)-8-amino-7-oxononanoate + holo-[ACP] + CO2</text>
        <dbReference type="Rhea" id="RHEA:42288"/>
        <dbReference type="Rhea" id="RHEA-COMP:9685"/>
        <dbReference type="Rhea" id="RHEA-COMP:9955"/>
        <dbReference type="ChEBI" id="CHEBI:15378"/>
        <dbReference type="ChEBI" id="CHEBI:16526"/>
        <dbReference type="ChEBI" id="CHEBI:57972"/>
        <dbReference type="ChEBI" id="CHEBI:64479"/>
        <dbReference type="ChEBI" id="CHEBI:78846"/>
        <dbReference type="ChEBI" id="CHEBI:149468"/>
        <dbReference type="EC" id="2.3.1.47"/>
    </reaction>
</comment>
<comment type="cofactor">
    <cofactor evidence="1">
        <name>pyridoxal 5'-phosphate</name>
        <dbReference type="ChEBI" id="CHEBI:597326"/>
    </cofactor>
</comment>
<comment type="pathway">
    <text>Cofactor biosynthesis; biotin biosynthesis.</text>
</comment>
<comment type="subunit">
    <text evidence="1">Homodimer.</text>
</comment>
<comment type="similarity">
    <text evidence="2">Belongs to the class-II pyridoxal-phosphate-dependent aminotransferase family. BioF subfamily.</text>
</comment>
<reference key="1">
    <citation type="journal article" date="2001" name="Proc. Natl. Acad. Sci. U.S.A.">
        <title>Complete genomic sequence of Pasteurella multocida Pm70.</title>
        <authorList>
            <person name="May B.J."/>
            <person name="Zhang Q."/>
            <person name="Li L.L."/>
            <person name="Paustian M.L."/>
            <person name="Whittam T.S."/>
            <person name="Kapur V."/>
        </authorList>
    </citation>
    <scope>NUCLEOTIDE SEQUENCE [LARGE SCALE GENOMIC DNA]</scope>
    <source>
        <strain>Pm70</strain>
    </source>
</reference>
<proteinExistence type="inferred from homology"/>
<organism>
    <name type="scientific">Pasteurella multocida (strain Pm70)</name>
    <dbReference type="NCBI Taxonomy" id="272843"/>
    <lineage>
        <taxon>Bacteria</taxon>
        <taxon>Pseudomonadati</taxon>
        <taxon>Pseudomonadota</taxon>
        <taxon>Gammaproteobacteria</taxon>
        <taxon>Pasteurellales</taxon>
        <taxon>Pasteurellaceae</taxon>
        <taxon>Pasteurella</taxon>
    </lineage>
</organism>
<feature type="chain" id="PRO_0000381060" description="Putative 8-amino-7-oxononanoate synthase">
    <location>
        <begin position="1"/>
        <end position="387"/>
    </location>
</feature>
<feature type="binding site" evidence="1">
    <location>
        <position position="19"/>
    </location>
    <ligand>
        <name>substrate</name>
    </ligand>
</feature>
<feature type="binding site" evidence="1">
    <location>
        <begin position="107"/>
        <end position="108"/>
    </location>
    <ligand>
        <name>pyridoxal 5'-phosphate</name>
        <dbReference type="ChEBI" id="CHEBI:597326"/>
    </ligand>
</feature>
<feature type="binding site" evidence="1">
    <location>
        <position position="132"/>
    </location>
    <ligand>
        <name>substrate</name>
    </ligand>
</feature>
<feature type="binding site" evidence="1">
    <location>
        <position position="180"/>
    </location>
    <ligand>
        <name>pyridoxal 5'-phosphate</name>
        <dbReference type="ChEBI" id="CHEBI:597326"/>
    </ligand>
</feature>
<feature type="binding site" evidence="1">
    <location>
        <begin position="206"/>
        <end position="209"/>
    </location>
    <ligand>
        <name>pyridoxal 5'-phosphate</name>
        <dbReference type="ChEBI" id="CHEBI:597326"/>
    </ligand>
</feature>
<feature type="binding site" evidence="1">
    <location>
        <begin position="237"/>
        <end position="240"/>
    </location>
    <ligand>
        <name>pyridoxal 5'-phosphate</name>
        <dbReference type="ChEBI" id="CHEBI:597326"/>
    </ligand>
</feature>
<feature type="binding site" evidence="1">
    <location>
        <position position="354"/>
    </location>
    <ligand>
        <name>substrate</name>
    </ligand>
</feature>
<feature type="modified residue" description="N6-(pyridoxal phosphate)lysine" evidence="1">
    <location>
        <position position="240"/>
    </location>
</feature>
<protein>
    <recommendedName>
        <fullName>Putative 8-amino-7-oxononanoate synthase</fullName>
        <shortName>AONS</shortName>
        <ecNumber>2.3.1.47</ecNumber>
    </recommendedName>
    <alternativeName>
        <fullName>7-keto-8-amino-pelargonic acid synthase</fullName>
        <shortName>7-KAP synthase</shortName>
    </alternativeName>
    <alternativeName>
        <fullName>8-amino-7-ketopelargonate synthase</fullName>
    </alternativeName>
</protein>
<keyword id="KW-0093">Biotin biosynthesis</keyword>
<keyword id="KW-0663">Pyridoxal phosphate</keyword>
<keyword id="KW-1185">Reference proteome</keyword>
<keyword id="KW-0808">Transferase</keyword>
<accession>Q9CJU0</accession>
<sequence>MIRYYQQQLADLKAQNQFRQLPQLIHRGRFIQREDNTMLNMSSNDYLGLANNEALRQAFFTQYQDQLPALTSSSSRLLTGSFPIYDELESLMAQAFGRETALLFNSGYHANIGILPALADKKTLIVADKLVHASMIDGIRLAQCEFVRFRHHDYAHLEQILQKNDRTFERIIVVTESVFSMDGDCADLTQLVALKQRYPQVMLYVDEAHAIGVLGEKGLGLAEQQGCINQIDILVGTFGKALGSMGAYVICDQVIRDYLVNKMRPLIFSTALPPFNVAWTHFVFQQLPHLQAERAHLAQLSQHLRQAIVDIFQVPMPSESCIVPYILGDNELTVRTAQRLQQQGYYCLPIRPPTVPKGTSRIRFSLTADMQVAEVEQFIACLQELAE</sequence>
<name>BIOF_PASMU</name>